<name>HUNB_DRODS</name>
<dbReference type="EMBL" id="U93004">
    <property type="protein sequence ID" value="AAC03252.1"/>
    <property type="molecule type" value="Genomic_DNA"/>
</dbReference>
<dbReference type="EMBL" id="U93005">
    <property type="protein sequence ID" value="AAC03253.1"/>
    <property type="molecule type" value="Genomic_DNA"/>
</dbReference>
<dbReference type="GO" id="GO:0005634">
    <property type="term" value="C:nucleus"/>
    <property type="evidence" value="ECO:0007669"/>
    <property type="project" value="UniProtKB-SubCell"/>
</dbReference>
<dbReference type="GO" id="GO:0003677">
    <property type="term" value="F:DNA binding"/>
    <property type="evidence" value="ECO:0007669"/>
    <property type="project" value="UniProtKB-KW"/>
</dbReference>
<dbReference type="GO" id="GO:0008270">
    <property type="term" value="F:zinc ion binding"/>
    <property type="evidence" value="ECO:0007669"/>
    <property type="project" value="UniProtKB-KW"/>
</dbReference>
<dbReference type="GO" id="GO:0035282">
    <property type="term" value="P:segmentation"/>
    <property type="evidence" value="ECO:0007669"/>
    <property type="project" value="UniProtKB-KW"/>
</dbReference>
<protein>
    <recommendedName>
        <fullName>Protein hunchback</fullName>
    </recommendedName>
</protein>
<feature type="chain" id="PRO_0000046954" description="Protein hunchback">
    <location>
        <begin position="1" status="less than"/>
        <end position="198" status="greater than"/>
    </location>
</feature>
<feature type="region of interest" description="Disordered" evidence="2">
    <location>
        <begin position="16"/>
        <end position="117"/>
    </location>
</feature>
<feature type="region of interest" description="Disordered" evidence="2">
    <location>
        <begin position="152"/>
        <end position="198"/>
    </location>
</feature>
<feature type="compositionally biased region" description="Basic residues" evidence="2">
    <location>
        <begin position="17"/>
        <end position="31"/>
    </location>
</feature>
<feature type="compositionally biased region" description="Low complexity" evidence="2">
    <location>
        <begin position="35"/>
        <end position="46"/>
    </location>
</feature>
<feature type="compositionally biased region" description="Low complexity" evidence="2">
    <location>
        <begin position="68"/>
        <end position="83"/>
    </location>
</feature>
<feature type="compositionally biased region" description="Polar residues" evidence="2">
    <location>
        <begin position="95"/>
        <end position="105"/>
    </location>
</feature>
<feature type="compositionally biased region" description="Basic and acidic residues" evidence="2">
    <location>
        <begin position="179"/>
        <end position="198"/>
    </location>
</feature>
<feature type="non-consecutive residues" evidence="3">
    <location>
        <begin position="104"/>
        <end position="105"/>
    </location>
</feature>
<feature type="non-terminal residue">
    <location>
        <position position="1"/>
    </location>
</feature>
<feature type="non-terminal residue">
    <location>
        <position position="198"/>
    </location>
</feature>
<keyword id="KW-0217">Developmental protein</keyword>
<keyword id="KW-0238">DNA-binding</keyword>
<keyword id="KW-0302">Gap protein</keyword>
<keyword id="KW-0479">Metal-binding</keyword>
<keyword id="KW-0539">Nucleus</keyword>
<keyword id="KW-0677">Repeat</keyword>
<keyword id="KW-0862">Zinc</keyword>
<keyword id="KW-0863">Zinc-finger</keyword>
<accession>O46240</accession>
<accession>O46241</accession>
<gene>
    <name type="primary">hb</name>
</gene>
<sequence length="198" mass="21735">WYSGMFAPNIKQEPISHHHHHHHAHHSHHQHPHDSNSNSNASSPHQSPLPSPNPPSNTILQLEQYLKQQQQQQQQQQQQQQQQPMDTLCAAAMTPSPSNNDQNSPLMLPGLPNPMQSIMLANLRPSPTATTTTTTPAAAPTTTAAAIALQANDKLQALTPPMDVTPPKSPAKSQQSCAEPEKEHDLMSNSSEDMKYMA</sequence>
<comment type="function">
    <text evidence="1">Gap class segmentation protein that controls development of head structures.</text>
</comment>
<comment type="subcellular location">
    <subcellularLocation>
        <location evidence="1">Nucleus</location>
    </subcellularLocation>
</comment>
<comment type="similarity">
    <text evidence="3">Belongs to the hunchback C2H2-type zinc-finger protein family.</text>
</comment>
<reference key="1">
    <citation type="journal article" date="1997" name="Syst. Biol.">
        <title>Multiple sources of character information and the phylogeny of Hawaiian Drosophilids.</title>
        <authorList>
            <person name="Baker R.H."/>
            <person name="DeSalle R."/>
        </authorList>
    </citation>
    <scope>NUCLEOTIDE SEQUENCE [GENOMIC DNA]</scope>
</reference>
<proteinExistence type="inferred from homology"/>
<evidence type="ECO:0000250" key="1"/>
<evidence type="ECO:0000256" key="2">
    <source>
        <dbReference type="SAM" id="MobiDB-lite"/>
    </source>
</evidence>
<evidence type="ECO:0000305" key="3"/>
<organism>
    <name type="scientific">Drosophila disjuncta</name>
    <name type="common">Fruit fly</name>
    <dbReference type="NCBI Taxonomy" id="46796"/>
    <lineage>
        <taxon>Eukaryota</taxon>
        <taxon>Metazoa</taxon>
        <taxon>Ecdysozoa</taxon>
        <taxon>Arthropoda</taxon>
        <taxon>Hexapoda</taxon>
        <taxon>Insecta</taxon>
        <taxon>Pterygota</taxon>
        <taxon>Neoptera</taxon>
        <taxon>Endopterygota</taxon>
        <taxon>Diptera</taxon>
        <taxon>Brachycera</taxon>
        <taxon>Muscomorpha</taxon>
        <taxon>Ephydroidea</taxon>
        <taxon>Drosophilidae</taxon>
        <taxon>Drosophila</taxon>
        <taxon>Hawaiian Drosophila</taxon>
    </lineage>
</organism>